<comment type="similarity">
    <text evidence="1">Belongs to the bacterial ribosomal protein bS16 family.</text>
</comment>
<reference key="1">
    <citation type="journal article" date="2010" name="Genome Biol. Evol.">
        <title>Continuing evolution of Burkholderia mallei through genome reduction and large-scale rearrangements.</title>
        <authorList>
            <person name="Losada L."/>
            <person name="Ronning C.M."/>
            <person name="DeShazer D."/>
            <person name="Woods D."/>
            <person name="Fedorova N."/>
            <person name="Kim H.S."/>
            <person name="Shabalina S.A."/>
            <person name="Pearson T.R."/>
            <person name="Brinkac L."/>
            <person name="Tan P."/>
            <person name="Nandi T."/>
            <person name="Crabtree J."/>
            <person name="Badger J."/>
            <person name="Beckstrom-Sternberg S."/>
            <person name="Saqib M."/>
            <person name="Schutzer S.E."/>
            <person name="Keim P."/>
            <person name="Nierman W.C."/>
        </authorList>
    </citation>
    <scope>NUCLEOTIDE SEQUENCE [LARGE SCALE GENOMIC DNA]</scope>
    <source>
        <strain>668</strain>
    </source>
</reference>
<protein>
    <recommendedName>
        <fullName evidence="1">Small ribosomal subunit protein bS16</fullName>
    </recommendedName>
    <alternativeName>
        <fullName evidence="2">30S ribosomal protein S16</fullName>
    </alternativeName>
</protein>
<gene>
    <name evidence="1" type="primary">rpsP</name>
    <name type="ordered locus">BURPS668_2859</name>
</gene>
<proteinExistence type="inferred from homology"/>
<sequence>MVIIRLARGGSKKRPFYNIVATDSRNRRDGRFIERVGFYNPVATKGEALRIAQDRLTYWQGVGAQLSPTVERLVKQAQKAQPAA</sequence>
<evidence type="ECO:0000255" key="1">
    <source>
        <dbReference type="HAMAP-Rule" id="MF_00385"/>
    </source>
</evidence>
<evidence type="ECO:0000305" key="2"/>
<accession>A3NC07</accession>
<keyword id="KW-0687">Ribonucleoprotein</keyword>
<keyword id="KW-0689">Ribosomal protein</keyword>
<organism>
    <name type="scientific">Burkholderia pseudomallei (strain 668)</name>
    <dbReference type="NCBI Taxonomy" id="320373"/>
    <lineage>
        <taxon>Bacteria</taxon>
        <taxon>Pseudomonadati</taxon>
        <taxon>Pseudomonadota</taxon>
        <taxon>Betaproteobacteria</taxon>
        <taxon>Burkholderiales</taxon>
        <taxon>Burkholderiaceae</taxon>
        <taxon>Burkholderia</taxon>
        <taxon>pseudomallei group</taxon>
    </lineage>
</organism>
<feature type="chain" id="PRO_1000049230" description="Small ribosomal subunit protein bS16">
    <location>
        <begin position="1"/>
        <end position="84"/>
    </location>
</feature>
<name>RS16_BURP6</name>
<dbReference type="EMBL" id="CP000570">
    <property type="protein sequence ID" value="ABN83963.1"/>
    <property type="molecule type" value="Genomic_DNA"/>
</dbReference>
<dbReference type="RefSeq" id="WP_004189402.1">
    <property type="nucleotide sequence ID" value="NC_009074.1"/>
</dbReference>
<dbReference type="SMR" id="A3NC07"/>
<dbReference type="GeneID" id="93061079"/>
<dbReference type="KEGG" id="bpd:BURPS668_2859"/>
<dbReference type="HOGENOM" id="CLU_100590_5_1_4"/>
<dbReference type="GO" id="GO:0005737">
    <property type="term" value="C:cytoplasm"/>
    <property type="evidence" value="ECO:0007669"/>
    <property type="project" value="UniProtKB-ARBA"/>
</dbReference>
<dbReference type="GO" id="GO:0015935">
    <property type="term" value="C:small ribosomal subunit"/>
    <property type="evidence" value="ECO:0007669"/>
    <property type="project" value="TreeGrafter"/>
</dbReference>
<dbReference type="GO" id="GO:0003735">
    <property type="term" value="F:structural constituent of ribosome"/>
    <property type="evidence" value="ECO:0007669"/>
    <property type="project" value="InterPro"/>
</dbReference>
<dbReference type="GO" id="GO:0006412">
    <property type="term" value="P:translation"/>
    <property type="evidence" value="ECO:0007669"/>
    <property type="project" value="UniProtKB-UniRule"/>
</dbReference>
<dbReference type="Gene3D" id="3.30.1320.10">
    <property type="match status" value="1"/>
</dbReference>
<dbReference type="HAMAP" id="MF_00385">
    <property type="entry name" value="Ribosomal_bS16"/>
    <property type="match status" value="1"/>
</dbReference>
<dbReference type="InterPro" id="IPR000307">
    <property type="entry name" value="Ribosomal_bS16"/>
</dbReference>
<dbReference type="InterPro" id="IPR023803">
    <property type="entry name" value="Ribosomal_bS16_dom_sf"/>
</dbReference>
<dbReference type="NCBIfam" id="TIGR00002">
    <property type="entry name" value="S16"/>
    <property type="match status" value="1"/>
</dbReference>
<dbReference type="PANTHER" id="PTHR12919">
    <property type="entry name" value="30S RIBOSOMAL PROTEIN S16"/>
    <property type="match status" value="1"/>
</dbReference>
<dbReference type="PANTHER" id="PTHR12919:SF20">
    <property type="entry name" value="SMALL RIBOSOMAL SUBUNIT PROTEIN BS16M"/>
    <property type="match status" value="1"/>
</dbReference>
<dbReference type="Pfam" id="PF00886">
    <property type="entry name" value="Ribosomal_S16"/>
    <property type="match status" value="1"/>
</dbReference>
<dbReference type="SUPFAM" id="SSF54565">
    <property type="entry name" value="Ribosomal protein S16"/>
    <property type="match status" value="1"/>
</dbReference>